<dbReference type="EMBL" id="CP000730">
    <property type="protein sequence ID" value="ABX30225.1"/>
    <property type="molecule type" value="Genomic_DNA"/>
</dbReference>
<dbReference type="RefSeq" id="WP_000004086.1">
    <property type="nucleotide sequence ID" value="NC_010079.1"/>
</dbReference>
<dbReference type="SMR" id="A8Z348"/>
<dbReference type="GeneID" id="98346553"/>
<dbReference type="KEGG" id="sax:USA300HOU_2232"/>
<dbReference type="HOGENOM" id="CLU_073626_1_0_9"/>
<dbReference type="GO" id="GO:0022627">
    <property type="term" value="C:cytosolic small ribosomal subunit"/>
    <property type="evidence" value="ECO:0007669"/>
    <property type="project" value="TreeGrafter"/>
</dbReference>
<dbReference type="GO" id="GO:0019843">
    <property type="term" value="F:rRNA binding"/>
    <property type="evidence" value="ECO:0007669"/>
    <property type="project" value="UniProtKB-UniRule"/>
</dbReference>
<dbReference type="GO" id="GO:0003735">
    <property type="term" value="F:structural constituent of ribosome"/>
    <property type="evidence" value="ECO:0007669"/>
    <property type="project" value="InterPro"/>
</dbReference>
<dbReference type="GO" id="GO:0006412">
    <property type="term" value="P:translation"/>
    <property type="evidence" value="ECO:0007669"/>
    <property type="project" value="UniProtKB-UniRule"/>
</dbReference>
<dbReference type="CDD" id="cd00364">
    <property type="entry name" value="Ribosomal_uS17"/>
    <property type="match status" value="1"/>
</dbReference>
<dbReference type="FunFam" id="2.40.50.140:FF:000026">
    <property type="entry name" value="30S ribosomal protein S17"/>
    <property type="match status" value="1"/>
</dbReference>
<dbReference type="Gene3D" id="2.40.50.140">
    <property type="entry name" value="Nucleic acid-binding proteins"/>
    <property type="match status" value="1"/>
</dbReference>
<dbReference type="HAMAP" id="MF_01345_B">
    <property type="entry name" value="Ribosomal_uS17_B"/>
    <property type="match status" value="1"/>
</dbReference>
<dbReference type="InterPro" id="IPR012340">
    <property type="entry name" value="NA-bd_OB-fold"/>
</dbReference>
<dbReference type="InterPro" id="IPR000266">
    <property type="entry name" value="Ribosomal_uS17"/>
</dbReference>
<dbReference type="InterPro" id="IPR019984">
    <property type="entry name" value="Ribosomal_uS17_bact/chlr"/>
</dbReference>
<dbReference type="InterPro" id="IPR019979">
    <property type="entry name" value="Ribosomal_uS17_CS"/>
</dbReference>
<dbReference type="NCBIfam" id="NF004123">
    <property type="entry name" value="PRK05610.1"/>
    <property type="match status" value="1"/>
</dbReference>
<dbReference type="NCBIfam" id="TIGR03635">
    <property type="entry name" value="uS17_bact"/>
    <property type="match status" value="1"/>
</dbReference>
<dbReference type="PANTHER" id="PTHR10744">
    <property type="entry name" value="40S RIBOSOMAL PROTEIN S11 FAMILY MEMBER"/>
    <property type="match status" value="1"/>
</dbReference>
<dbReference type="PANTHER" id="PTHR10744:SF1">
    <property type="entry name" value="SMALL RIBOSOMAL SUBUNIT PROTEIN US17M"/>
    <property type="match status" value="1"/>
</dbReference>
<dbReference type="Pfam" id="PF00366">
    <property type="entry name" value="Ribosomal_S17"/>
    <property type="match status" value="1"/>
</dbReference>
<dbReference type="PRINTS" id="PR00973">
    <property type="entry name" value="RIBOSOMALS17"/>
</dbReference>
<dbReference type="SUPFAM" id="SSF50249">
    <property type="entry name" value="Nucleic acid-binding proteins"/>
    <property type="match status" value="1"/>
</dbReference>
<dbReference type="PROSITE" id="PS00056">
    <property type="entry name" value="RIBOSOMAL_S17"/>
    <property type="match status" value="1"/>
</dbReference>
<comment type="function">
    <text evidence="1">One of the primary rRNA binding proteins, it binds specifically to the 5'-end of 16S ribosomal RNA.</text>
</comment>
<comment type="subunit">
    <text evidence="1">Part of the 30S ribosomal subunit.</text>
</comment>
<comment type="similarity">
    <text evidence="1">Belongs to the universal ribosomal protein uS17 family.</text>
</comment>
<keyword id="KW-0687">Ribonucleoprotein</keyword>
<keyword id="KW-0689">Ribosomal protein</keyword>
<keyword id="KW-0694">RNA-binding</keyword>
<keyword id="KW-0699">rRNA-binding</keyword>
<evidence type="ECO:0000255" key="1">
    <source>
        <dbReference type="HAMAP-Rule" id="MF_01345"/>
    </source>
</evidence>
<evidence type="ECO:0000305" key="2"/>
<name>RS17_STAAT</name>
<accession>A8Z348</accession>
<sequence length="87" mass="10175">MSERNDRKVYVGKVVSDKMDKTITVLVETYKTHKLYGKRVKYSKKYKTHDENNSAKLGDIVKIQETRPLSATKRFRLVEIVEESVII</sequence>
<feature type="chain" id="PRO_1000086862" description="Small ribosomal subunit protein uS17">
    <location>
        <begin position="1"/>
        <end position="87"/>
    </location>
</feature>
<gene>
    <name evidence="1" type="primary">rpsQ</name>
    <name type="ordered locus">USA300HOU_2232</name>
</gene>
<organism>
    <name type="scientific">Staphylococcus aureus (strain USA300 / TCH1516)</name>
    <dbReference type="NCBI Taxonomy" id="451516"/>
    <lineage>
        <taxon>Bacteria</taxon>
        <taxon>Bacillati</taxon>
        <taxon>Bacillota</taxon>
        <taxon>Bacilli</taxon>
        <taxon>Bacillales</taxon>
        <taxon>Staphylococcaceae</taxon>
        <taxon>Staphylococcus</taxon>
    </lineage>
</organism>
<protein>
    <recommendedName>
        <fullName evidence="1">Small ribosomal subunit protein uS17</fullName>
    </recommendedName>
    <alternativeName>
        <fullName evidence="2">30S ribosomal protein S17</fullName>
    </alternativeName>
</protein>
<proteinExistence type="inferred from homology"/>
<reference key="1">
    <citation type="journal article" date="2007" name="BMC Microbiol.">
        <title>Subtle genetic changes enhance virulence of methicillin resistant and sensitive Staphylococcus aureus.</title>
        <authorList>
            <person name="Highlander S.K."/>
            <person name="Hulten K.G."/>
            <person name="Qin X."/>
            <person name="Jiang H."/>
            <person name="Yerrapragada S."/>
            <person name="Mason E.O. Jr."/>
            <person name="Shang Y."/>
            <person name="Williams T.M."/>
            <person name="Fortunov R.M."/>
            <person name="Liu Y."/>
            <person name="Igboeli O."/>
            <person name="Petrosino J."/>
            <person name="Tirumalai M."/>
            <person name="Uzman A."/>
            <person name="Fox G.E."/>
            <person name="Cardenas A.M."/>
            <person name="Muzny D.M."/>
            <person name="Hemphill L."/>
            <person name="Ding Y."/>
            <person name="Dugan S."/>
            <person name="Blyth P.R."/>
            <person name="Buhay C.J."/>
            <person name="Dinh H.H."/>
            <person name="Hawes A.C."/>
            <person name="Holder M."/>
            <person name="Kovar C.L."/>
            <person name="Lee S.L."/>
            <person name="Liu W."/>
            <person name="Nazareth L.V."/>
            <person name="Wang Q."/>
            <person name="Zhou J."/>
            <person name="Kaplan S.L."/>
            <person name="Weinstock G.M."/>
        </authorList>
    </citation>
    <scope>NUCLEOTIDE SEQUENCE [LARGE SCALE GENOMIC DNA]</scope>
    <source>
        <strain>USA300 / TCH1516</strain>
    </source>
</reference>